<gene>
    <name type="primary">SOWAHA</name>
    <name type="synonym">ANKRD43</name>
</gene>
<organism>
    <name type="scientific">Homo sapiens</name>
    <name type="common">Human</name>
    <dbReference type="NCBI Taxonomy" id="9606"/>
    <lineage>
        <taxon>Eukaryota</taxon>
        <taxon>Metazoa</taxon>
        <taxon>Chordata</taxon>
        <taxon>Craniata</taxon>
        <taxon>Vertebrata</taxon>
        <taxon>Euteleostomi</taxon>
        <taxon>Mammalia</taxon>
        <taxon>Eutheria</taxon>
        <taxon>Euarchontoglires</taxon>
        <taxon>Primates</taxon>
        <taxon>Haplorrhini</taxon>
        <taxon>Catarrhini</taxon>
        <taxon>Hominidae</taxon>
        <taxon>Homo</taxon>
    </lineage>
</organism>
<name>SWAHA_HUMAN</name>
<protein>
    <recommendedName>
        <fullName>Ankyrin repeat domain-containing protein SOWAHA</fullName>
    </recommendedName>
    <alternativeName>
        <fullName>Ankyrin repeat domain-containing protein 43</fullName>
    </alternativeName>
    <alternativeName>
        <fullName>Protein sosondowah homolog A</fullName>
    </alternativeName>
</protein>
<accession>Q2M3V2</accession>
<accession>Q8NAE7</accession>
<sequence length="549" mass="57409">MALAAAAAAAAAGVSQAAVLGFLQEHGGKVRNSELLSRFKPLLDAGDPRGRAARRDRFKQFVNNVAVVKELDGVKFVVLRKKPRPPEPEPAPFGPPGAAAQPSKPTSTVLPRSASAPGAPPLVRVPRPVEPPGDLGLPTEPQDTPGGPASEPAQPPGERSADPPLPALELAQATERPSADAAPPPRAPSEAASPCSDPPDAEPGPGAAKGPPQQKPCMLPVRCVPAPATLRLRAEEPGLRRQLSEEPSPRSSPLLLRRLSVEESGLGLGLGPGRSPHLRRLSRAGPRLLSPDAEELPAAPPPSAVPLEPSEHEWLVRTAGGRWTHQLHGLLLRDRGLAAKRDFMSGFTALHWAAKSGDGEMALQLVEVARRSGAPVDVNARSHGGYTPLHLAALHGHEDAAVLLVVRLGAQVHVRDHSGRRAYQYLRPGSSYALRRLLGDPGLRGTTEPDATGGGSGSLAARRPVQVAATILSSTTSAFLGVLADDLMLQDLARGLKKSSSFSKFLSASPMAPRKKTKIRGGLPAFSEISRRPTPGPLAGLVPSLPPTT</sequence>
<comment type="similarity">
    <text evidence="4">Belongs to the SOWAH family.</text>
</comment>
<comment type="sequence caution" evidence="4">
    <conflict type="erroneous initiation">
        <sequence resource="EMBL-CDS" id="AAI04772"/>
    </conflict>
    <text>Truncated N-terminus.</text>
</comment>
<comment type="sequence caution" evidence="4">
    <conflict type="erroneous initiation">
        <sequence resource="EMBL-CDS" id="AAI04776"/>
    </conflict>
    <text>Truncated N-terminus.</text>
</comment>
<comment type="sequence caution" evidence="4">
    <conflict type="erroneous initiation">
        <sequence resource="EMBL-CDS" id="BAC03975"/>
    </conflict>
    <text>Truncated N-terminus.</text>
</comment>
<keyword id="KW-0040">ANK repeat</keyword>
<keyword id="KW-0597">Phosphoprotein</keyword>
<keyword id="KW-1267">Proteomics identification</keyword>
<keyword id="KW-1185">Reference proteome</keyword>
<keyword id="KW-0677">Repeat</keyword>
<keyword id="KW-0732">Signal</keyword>
<proteinExistence type="evidence at protein level"/>
<dbReference type="EMBL" id="AC004775">
    <property type="status" value="NOT_ANNOTATED_CDS"/>
    <property type="molecule type" value="Genomic_DNA"/>
</dbReference>
<dbReference type="EMBL" id="BC104771">
    <property type="protein sequence ID" value="AAI04772.1"/>
    <property type="status" value="ALT_INIT"/>
    <property type="molecule type" value="mRNA"/>
</dbReference>
<dbReference type="EMBL" id="BC104775">
    <property type="protein sequence ID" value="AAI04776.1"/>
    <property type="status" value="ALT_INIT"/>
    <property type="molecule type" value="mRNA"/>
</dbReference>
<dbReference type="EMBL" id="AK092782">
    <property type="protein sequence ID" value="BAC03975.1"/>
    <property type="status" value="ALT_INIT"/>
    <property type="molecule type" value="mRNA"/>
</dbReference>
<dbReference type="CCDS" id="CCDS43361.1"/>
<dbReference type="RefSeq" id="NP_787069.4">
    <property type="nucleotide sequence ID" value="NM_175873.5"/>
</dbReference>
<dbReference type="SMR" id="Q2M3V2"/>
<dbReference type="FunCoup" id="Q2M3V2">
    <property type="interactions" value="64"/>
</dbReference>
<dbReference type="IntAct" id="Q2M3V2">
    <property type="interactions" value="4"/>
</dbReference>
<dbReference type="STRING" id="9606.ENSP00000367965"/>
<dbReference type="GlyGen" id="Q2M3V2">
    <property type="glycosylation" value="1 site"/>
</dbReference>
<dbReference type="iPTMnet" id="Q2M3V2"/>
<dbReference type="PhosphoSitePlus" id="Q2M3V2"/>
<dbReference type="BioMuta" id="SOWAHA"/>
<dbReference type="DMDM" id="296439442"/>
<dbReference type="jPOST" id="Q2M3V2"/>
<dbReference type="MassIVE" id="Q2M3V2"/>
<dbReference type="PaxDb" id="9606-ENSP00000367965"/>
<dbReference type="PeptideAtlas" id="Q2M3V2"/>
<dbReference type="ProteomicsDB" id="61383"/>
<dbReference type="Pumba" id="Q2M3V2"/>
<dbReference type="Antibodypedia" id="74825">
    <property type="antibodies" value="4 antibodies from 4 providers"/>
</dbReference>
<dbReference type="Ensembl" id="ENST00000378693.4">
    <property type="protein sequence ID" value="ENSP00000367965.2"/>
    <property type="gene ID" value="ENSG00000198944.6"/>
</dbReference>
<dbReference type="GeneID" id="134548"/>
<dbReference type="KEGG" id="hsa:134548"/>
<dbReference type="MANE-Select" id="ENST00000378693.4">
    <property type="protein sequence ID" value="ENSP00000367965.2"/>
    <property type="RefSeq nucleotide sequence ID" value="NM_175873.6"/>
    <property type="RefSeq protein sequence ID" value="NP_787069.4"/>
</dbReference>
<dbReference type="UCSC" id="uc003kxw.4">
    <property type="organism name" value="human"/>
</dbReference>
<dbReference type="AGR" id="HGNC:27033"/>
<dbReference type="CTD" id="134548"/>
<dbReference type="DisGeNET" id="134548"/>
<dbReference type="GeneCards" id="SOWAHA"/>
<dbReference type="HGNC" id="HGNC:27033">
    <property type="gene designation" value="SOWAHA"/>
</dbReference>
<dbReference type="HPA" id="ENSG00000198944">
    <property type="expression patterns" value="Tissue enriched (brain)"/>
</dbReference>
<dbReference type="neXtProt" id="NX_Q2M3V2"/>
<dbReference type="OpenTargets" id="ENSG00000198944"/>
<dbReference type="PharmGKB" id="PA142672610"/>
<dbReference type="VEuPathDB" id="HostDB:ENSG00000198944"/>
<dbReference type="eggNOG" id="ENOG502RXAT">
    <property type="taxonomic scope" value="Eukaryota"/>
</dbReference>
<dbReference type="GeneTree" id="ENSGT00950000183003"/>
<dbReference type="HOGENOM" id="CLU_041239_1_0_1"/>
<dbReference type="InParanoid" id="Q2M3V2"/>
<dbReference type="OMA" id="PPKPCML"/>
<dbReference type="OrthoDB" id="432281at2759"/>
<dbReference type="PAN-GO" id="Q2M3V2">
    <property type="GO annotations" value="0 GO annotations based on evolutionary models"/>
</dbReference>
<dbReference type="PhylomeDB" id="Q2M3V2"/>
<dbReference type="TreeFam" id="TF331362"/>
<dbReference type="PathwayCommons" id="Q2M3V2"/>
<dbReference type="SignaLink" id="Q2M3V2"/>
<dbReference type="Pharos" id="Q2M3V2">
    <property type="development level" value="Tdark"/>
</dbReference>
<dbReference type="PRO" id="PR:Q2M3V2"/>
<dbReference type="Proteomes" id="UP000005640">
    <property type="component" value="Chromosome 5"/>
</dbReference>
<dbReference type="RNAct" id="Q2M3V2">
    <property type="molecule type" value="protein"/>
</dbReference>
<dbReference type="Bgee" id="ENSG00000198944">
    <property type="expression patterns" value="Expressed in endothelial cell and 133 other cell types or tissues"/>
</dbReference>
<dbReference type="Gene3D" id="1.25.40.20">
    <property type="entry name" value="Ankyrin repeat-containing domain"/>
    <property type="match status" value="1"/>
</dbReference>
<dbReference type="InterPro" id="IPR002110">
    <property type="entry name" value="Ankyrin_rpt"/>
</dbReference>
<dbReference type="InterPro" id="IPR036770">
    <property type="entry name" value="Ankyrin_rpt-contain_sf"/>
</dbReference>
<dbReference type="PANTHER" id="PTHR14491:SF2">
    <property type="entry name" value="ANKYRIN REPEAT DOMAIN-CONTAINING PROTEIN SOWAHA"/>
    <property type="match status" value="1"/>
</dbReference>
<dbReference type="PANTHER" id="PTHR14491">
    <property type="entry name" value="SOSONDOWAH, ISOFORM G"/>
    <property type="match status" value="1"/>
</dbReference>
<dbReference type="Pfam" id="PF12796">
    <property type="entry name" value="Ank_2"/>
    <property type="match status" value="1"/>
</dbReference>
<dbReference type="SMART" id="SM00248">
    <property type="entry name" value="ANK"/>
    <property type="match status" value="2"/>
</dbReference>
<dbReference type="SUPFAM" id="SSF48403">
    <property type="entry name" value="Ankyrin repeat"/>
    <property type="match status" value="1"/>
</dbReference>
<dbReference type="PROSITE" id="PS50297">
    <property type="entry name" value="ANK_REP_REGION"/>
    <property type="match status" value="1"/>
</dbReference>
<dbReference type="PROSITE" id="PS50088">
    <property type="entry name" value="ANK_REPEAT"/>
    <property type="match status" value="2"/>
</dbReference>
<feature type="signal peptide" evidence="2">
    <location>
        <begin position="1"/>
        <end position="17"/>
    </location>
</feature>
<feature type="chain" id="PRO_0000244373" description="Ankyrin repeat domain-containing protein SOWAHA">
    <location>
        <begin position="18"/>
        <end position="549"/>
    </location>
</feature>
<feature type="repeat" description="ANK 1">
    <location>
        <begin position="345"/>
        <end position="374"/>
    </location>
</feature>
<feature type="repeat" description="ANK 2">
    <location>
        <begin position="384"/>
        <end position="414"/>
    </location>
</feature>
<feature type="region of interest" description="Disordered" evidence="3">
    <location>
        <begin position="82"/>
        <end position="219"/>
    </location>
</feature>
<feature type="region of interest" description="Disordered" evidence="3">
    <location>
        <begin position="235"/>
        <end position="256"/>
    </location>
</feature>
<feature type="region of interest" description="Disordered" evidence="3">
    <location>
        <begin position="513"/>
        <end position="549"/>
    </location>
</feature>
<feature type="compositionally biased region" description="Low complexity" evidence="3">
    <location>
        <begin position="203"/>
        <end position="216"/>
    </location>
</feature>
<feature type="compositionally biased region" description="Basic and acidic residues" evidence="3">
    <location>
        <begin position="235"/>
        <end position="248"/>
    </location>
</feature>
<feature type="modified residue" description="Phosphoserine" evidence="1">
    <location>
        <position position="260"/>
    </location>
</feature>
<feature type="sequence variant" id="VAR_059125" description="In dbSNP:rs40274.">
    <original>R</original>
    <variation>P</variation>
    <location>
        <position position="124"/>
    </location>
</feature>
<feature type="sequence variant" id="VAR_060465" description="In dbSNP:rs40470.">
    <original>L</original>
    <variation>F</variation>
    <location>
        <position position="545"/>
    </location>
</feature>
<evidence type="ECO:0000250" key="1">
    <source>
        <dbReference type="UniProtKB" id="Q8BLS7"/>
    </source>
</evidence>
<evidence type="ECO:0000255" key="2"/>
<evidence type="ECO:0000256" key="3">
    <source>
        <dbReference type="SAM" id="MobiDB-lite"/>
    </source>
</evidence>
<evidence type="ECO:0000305" key="4"/>
<reference key="1">
    <citation type="journal article" date="2004" name="Nature">
        <title>The DNA sequence and comparative analysis of human chromosome 5.</title>
        <authorList>
            <person name="Schmutz J."/>
            <person name="Martin J."/>
            <person name="Terry A."/>
            <person name="Couronne O."/>
            <person name="Grimwood J."/>
            <person name="Lowry S."/>
            <person name="Gordon L.A."/>
            <person name="Scott D."/>
            <person name="Xie G."/>
            <person name="Huang W."/>
            <person name="Hellsten U."/>
            <person name="Tran-Gyamfi M."/>
            <person name="She X."/>
            <person name="Prabhakar S."/>
            <person name="Aerts A."/>
            <person name="Altherr M."/>
            <person name="Bajorek E."/>
            <person name="Black S."/>
            <person name="Branscomb E."/>
            <person name="Caoile C."/>
            <person name="Challacombe J.F."/>
            <person name="Chan Y.M."/>
            <person name="Denys M."/>
            <person name="Detter J.C."/>
            <person name="Escobar J."/>
            <person name="Flowers D."/>
            <person name="Fotopulos D."/>
            <person name="Glavina T."/>
            <person name="Gomez M."/>
            <person name="Gonzales E."/>
            <person name="Goodstein D."/>
            <person name="Grigoriev I."/>
            <person name="Groza M."/>
            <person name="Hammon N."/>
            <person name="Hawkins T."/>
            <person name="Haydu L."/>
            <person name="Israni S."/>
            <person name="Jett J."/>
            <person name="Kadner K."/>
            <person name="Kimball H."/>
            <person name="Kobayashi A."/>
            <person name="Lopez F."/>
            <person name="Lou Y."/>
            <person name="Martinez D."/>
            <person name="Medina C."/>
            <person name="Morgan J."/>
            <person name="Nandkeshwar R."/>
            <person name="Noonan J.P."/>
            <person name="Pitluck S."/>
            <person name="Pollard M."/>
            <person name="Predki P."/>
            <person name="Priest J."/>
            <person name="Ramirez L."/>
            <person name="Retterer J."/>
            <person name="Rodriguez A."/>
            <person name="Rogers S."/>
            <person name="Salamov A."/>
            <person name="Salazar A."/>
            <person name="Thayer N."/>
            <person name="Tice H."/>
            <person name="Tsai M."/>
            <person name="Ustaszewska A."/>
            <person name="Vo N."/>
            <person name="Wheeler J."/>
            <person name="Wu K."/>
            <person name="Yang J."/>
            <person name="Dickson M."/>
            <person name="Cheng J.-F."/>
            <person name="Eichler E.E."/>
            <person name="Olsen A."/>
            <person name="Pennacchio L.A."/>
            <person name="Rokhsar D.S."/>
            <person name="Richardson P."/>
            <person name="Lucas S.M."/>
            <person name="Myers R.M."/>
            <person name="Rubin E.M."/>
        </authorList>
    </citation>
    <scope>NUCLEOTIDE SEQUENCE [LARGE SCALE GENOMIC DNA]</scope>
</reference>
<reference key="2">
    <citation type="journal article" date="2004" name="Genome Res.">
        <title>The status, quality, and expansion of the NIH full-length cDNA project: the Mammalian Gene Collection (MGC).</title>
        <authorList>
            <consortium name="The MGC Project Team"/>
        </authorList>
    </citation>
    <scope>NUCLEOTIDE SEQUENCE [LARGE SCALE MRNA] OF 192-549</scope>
    <source>
        <tissue>Brain</tissue>
    </source>
</reference>
<reference key="3">
    <citation type="journal article" date="2004" name="Nat. Genet.">
        <title>Complete sequencing and characterization of 21,243 full-length human cDNAs.</title>
        <authorList>
            <person name="Ota T."/>
            <person name="Suzuki Y."/>
            <person name="Nishikawa T."/>
            <person name="Otsuki T."/>
            <person name="Sugiyama T."/>
            <person name="Irie R."/>
            <person name="Wakamatsu A."/>
            <person name="Hayashi K."/>
            <person name="Sato H."/>
            <person name="Nagai K."/>
            <person name="Kimura K."/>
            <person name="Makita H."/>
            <person name="Sekine M."/>
            <person name="Obayashi M."/>
            <person name="Nishi T."/>
            <person name="Shibahara T."/>
            <person name="Tanaka T."/>
            <person name="Ishii S."/>
            <person name="Yamamoto J."/>
            <person name="Saito K."/>
            <person name="Kawai Y."/>
            <person name="Isono Y."/>
            <person name="Nakamura Y."/>
            <person name="Nagahari K."/>
            <person name="Murakami K."/>
            <person name="Yasuda T."/>
            <person name="Iwayanagi T."/>
            <person name="Wagatsuma M."/>
            <person name="Shiratori A."/>
            <person name="Sudo H."/>
            <person name="Hosoiri T."/>
            <person name="Kaku Y."/>
            <person name="Kodaira H."/>
            <person name="Kondo H."/>
            <person name="Sugawara M."/>
            <person name="Takahashi M."/>
            <person name="Kanda K."/>
            <person name="Yokoi T."/>
            <person name="Furuya T."/>
            <person name="Kikkawa E."/>
            <person name="Omura Y."/>
            <person name="Abe K."/>
            <person name="Kamihara K."/>
            <person name="Katsuta N."/>
            <person name="Sato K."/>
            <person name="Tanikawa M."/>
            <person name="Yamazaki M."/>
            <person name="Ninomiya K."/>
            <person name="Ishibashi T."/>
            <person name="Yamashita H."/>
            <person name="Murakawa K."/>
            <person name="Fujimori K."/>
            <person name="Tanai H."/>
            <person name="Kimata M."/>
            <person name="Watanabe M."/>
            <person name="Hiraoka S."/>
            <person name="Chiba Y."/>
            <person name="Ishida S."/>
            <person name="Ono Y."/>
            <person name="Takiguchi S."/>
            <person name="Watanabe S."/>
            <person name="Yosida M."/>
            <person name="Hotuta T."/>
            <person name="Kusano J."/>
            <person name="Kanehori K."/>
            <person name="Takahashi-Fujii A."/>
            <person name="Hara H."/>
            <person name="Tanase T.-O."/>
            <person name="Nomura Y."/>
            <person name="Togiya S."/>
            <person name="Komai F."/>
            <person name="Hara R."/>
            <person name="Takeuchi K."/>
            <person name="Arita M."/>
            <person name="Imose N."/>
            <person name="Musashino K."/>
            <person name="Yuuki H."/>
            <person name="Oshima A."/>
            <person name="Sasaki N."/>
            <person name="Aotsuka S."/>
            <person name="Yoshikawa Y."/>
            <person name="Matsunawa H."/>
            <person name="Ichihara T."/>
            <person name="Shiohata N."/>
            <person name="Sano S."/>
            <person name="Moriya S."/>
            <person name="Momiyama H."/>
            <person name="Satoh N."/>
            <person name="Takami S."/>
            <person name="Terashima Y."/>
            <person name="Suzuki O."/>
            <person name="Nakagawa S."/>
            <person name="Senoh A."/>
            <person name="Mizoguchi H."/>
            <person name="Goto Y."/>
            <person name="Shimizu F."/>
            <person name="Wakebe H."/>
            <person name="Hishigaki H."/>
            <person name="Watanabe T."/>
            <person name="Sugiyama A."/>
            <person name="Takemoto M."/>
            <person name="Kawakami B."/>
            <person name="Yamazaki M."/>
            <person name="Watanabe K."/>
            <person name="Kumagai A."/>
            <person name="Itakura S."/>
            <person name="Fukuzumi Y."/>
            <person name="Fujimori Y."/>
            <person name="Komiyama M."/>
            <person name="Tashiro H."/>
            <person name="Tanigami A."/>
            <person name="Fujiwara T."/>
            <person name="Ono T."/>
            <person name="Yamada K."/>
            <person name="Fujii Y."/>
            <person name="Ozaki K."/>
            <person name="Hirao M."/>
            <person name="Ohmori Y."/>
            <person name="Kawabata A."/>
            <person name="Hikiji T."/>
            <person name="Kobatake N."/>
            <person name="Inagaki H."/>
            <person name="Ikema Y."/>
            <person name="Okamoto S."/>
            <person name="Okitani R."/>
            <person name="Kawakami T."/>
            <person name="Noguchi S."/>
            <person name="Itoh T."/>
            <person name="Shigeta K."/>
            <person name="Senba T."/>
            <person name="Matsumura K."/>
            <person name="Nakajima Y."/>
            <person name="Mizuno T."/>
            <person name="Morinaga M."/>
            <person name="Sasaki M."/>
            <person name="Togashi T."/>
            <person name="Oyama M."/>
            <person name="Hata H."/>
            <person name="Watanabe M."/>
            <person name="Komatsu T."/>
            <person name="Mizushima-Sugano J."/>
            <person name="Satoh T."/>
            <person name="Shirai Y."/>
            <person name="Takahashi Y."/>
            <person name="Nakagawa K."/>
            <person name="Okumura K."/>
            <person name="Nagase T."/>
            <person name="Nomura N."/>
            <person name="Kikuchi H."/>
            <person name="Masuho Y."/>
            <person name="Yamashita R."/>
            <person name="Nakai K."/>
            <person name="Yada T."/>
            <person name="Nakamura Y."/>
            <person name="Ohara O."/>
            <person name="Isogai T."/>
            <person name="Sugano S."/>
        </authorList>
    </citation>
    <scope>NUCLEOTIDE SEQUENCE [LARGE SCALE MRNA] OF 254-549</scope>
    <source>
        <tissue>Small intestine</tissue>
    </source>
</reference>
<reference key="4">
    <citation type="journal article" date="2009" name="Anal. Chem.">
        <title>Lys-N and trypsin cover complementary parts of the phosphoproteome in a refined SCX-based approach.</title>
        <authorList>
            <person name="Gauci S."/>
            <person name="Helbig A.O."/>
            <person name="Slijper M."/>
            <person name="Krijgsveld J."/>
            <person name="Heck A.J."/>
            <person name="Mohammed S."/>
        </authorList>
    </citation>
    <scope>IDENTIFICATION BY MASS SPECTROMETRY [LARGE SCALE ANALYSIS]</scope>
</reference>